<keyword id="KW-0067">ATP-binding</keyword>
<keyword id="KW-0963">Cytoplasm</keyword>
<keyword id="KW-0436">Ligase</keyword>
<keyword id="KW-0547">Nucleotide-binding</keyword>
<keyword id="KW-0566">Pantothenate biosynthesis</keyword>
<comment type="function">
    <text evidence="1">Catalyzes the condensation of pantoate with beta-alanine in an ATP-dependent reaction via a pantoyl-adenylate intermediate.</text>
</comment>
<comment type="catalytic activity">
    <reaction evidence="1">
        <text>(R)-pantoate + beta-alanine + ATP = (R)-pantothenate + AMP + diphosphate + H(+)</text>
        <dbReference type="Rhea" id="RHEA:10912"/>
        <dbReference type="ChEBI" id="CHEBI:15378"/>
        <dbReference type="ChEBI" id="CHEBI:15980"/>
        <dbReference type="ChEBI" id="CHEBI:29032"/>
        <dbReference type="ChEBI" id="CHEBI:30616"/>
        <dbReference type="ChEBI" id="CHEBI:33019"/>
        <dbReference type="ChEBI" id="CHEBI:57966"/>
        <dbReference type="ChEBI" id="CHEBI:456215"/>
        <dbReference type="EC" id="6.3.2.1"/>
    </reaction>
</comment>
<comment type="pathway">
    <text evidence="1">Cofactor biosynthesis; (R)-pantothenate biosynthesis; (R)-pantothenate from (R)-pantoate and beta-alanine: step 1/1.</text>
</comment>
<comment type="subunit">
    <text evidence="1">Homodimer.</text>
</comment>
<comment type="subcellular location">
    <subcellularLocation>
        <location evidence="1">Cytoplasm</location>
    </subcellularLocation>
</comment>
<comment type="miscellaneous">
    <text evidence="1">The reaction proceeds by a bi uni uni bi ping pong mechanism.</text>
</comment>
<comment type="similarity">
    <text evidence="1">Belongs to the pantothenate synthetase family.</text>
</comment>
<organism>
    <name type="scientific">Shewanella halifaxensis (strain HAW-EB4)</name>
    <dbReference type="NCBI Taxonomy" id="458817"/>
    <lineage>
        <taxon>Bacteria</taxon>
        <taxon>Pseudomonadati</taxon>
        <taxon>Pseudomonadota</taxon>
        <taxon>Gammaproteobacteria</taxon>
        <taxon>Alteromonadales</taxon>
        <taxon>Shewanellaceae</taxon>
        <taxon>Shewanella</taxon>
    </lineage>
</organism>
<proteinExistence type="inferred from homology"/>
<dbReference type="EC" id="6.3.2.1" evidence="1"/>
<dbReference type="EMBL" id="CP000931">
    <property type="protein sequence ID" value="ABZ75324.1"/>
    <property type="molecule type" value="Genomic_DNA"/>
</dbReference>
<dbReference type="RefSeq" id="WP_012275878.1">
    <property type="nucleotide sequence ID" value="NC_010334.1"/>
</dbReference>
<dbReference type="SMR" id="B0TTI1"/>
<dbReference type="STRING" id="458817.Shal_0749"/>
<dbReference type="KEGG" id="shl:Shal_0749"/>
<dbReference type="eggNOG" id="COG0414">
    <property type="taxonomic scope" value="Bacteria"/>
</dbReference>
<dbReference type="HOGENOM" id="CLU_047148_0_0_6"/>
<dbReference type="OrthoDB" id="9773087at2"/>
<dbReference type="UniPathway" id="UPA00028">
    <property type="reaction ID" value="UER00005"/>
</dbReference>
<dbReference type="Proteomes" id="UP000001317">
    <property type="component" value="Chromosome"/>
</dbReference>
<dbReference type="GO" id="GO:0005829">
    <property type="term" value="C:cytosol"/>
    <property type="evidence" value="ECO:0007669"/>
    <property type="project" value="TreeGrafter"/>
</dbReference>
<dbReference type="GO" id="GO:0005524">
    <property type="term" value="F:ATP binding"/>
    <property type="evidence" value="ECO:0007669"/>
    <property type="project" value="UniProtKB-KW"/>
</dbReference>
<dbReference type="GO" id="GO:0004592">
    <property type="term" value="F:pantoate-beta-alanine ligase activity"/>
    <property type="evidence" value="ECO:0007669"/>
    <property type="project" value="UniProtKB-UniRule"/>
</dbReference>
<dbReference type="GO" id="GO:0015940">
    <property type="term" value="P:pantothenate biosynthetic process"/>
    <property type="evidence" value="ECO:0007669"/>
    <property type="project" value="UniProtKB-UniRule"/>
</dbReference>
<dbReference type="CDD" id="cd00560">
    <property type="entry name" value="PanC"/>
    <property type="match status" value="1"/>
</dbReference>
<dbReference type="FunFam" id="3.30.1300.10:FF:000001">
    <property type="entry name" value="Pantothenate synthetase"/>
    <property type="match status" value="1"/>
</dbReference>
<dbReference type="FunFam" id="3.40.50.620:FF:000013">
    <property type="entry name" value="Pantothenate synthetase"/>
    <property type="match status" value="1"/>
</dbReference>
<dbReference type="Gene3D" id="3.40.50.620">
    <property type="entry name" value="HUPs"/>
    <property type="match status" value="1"/>
</dbReference>
<dbReference type="Gene3D" id="3.30.1300.10">
    <property type="entry name" value="Pantoate-beta-alanine ligase, C-terminal domain"/>
    <property type="match status" value="1"/>
</dbReference>
<dbReference type="HAMAP" id="MF_00158">
    <property type="entry name" value="PanC"/>
    <property type="match status" value="1"/>
</dbReference>
<dbReference type="InterPro" id="IPR004821">
    <property type="entry name" value="Cyt_trans-like"/>
</dbReference>
<dbReference type="InterPro" id="IPR003721">
    <property type="entry name" value="Pantoate_ligase"/>
</dbReference>
<dbReference type="InterPro" id="IPR042176">
    <property type="entry name" value="Pantoate_ligase_C"/>
</dbReference>
<dbReference type="InterPro" id="IPR014729">
    <property type="entry name" value="Rossmann-like_a/b/a_fold"/>
</dbReference>
<dbReference type="NCBIfam" id="TIGR00125">
    <property type="entry name" value="cyt_tran_rel"/>
    <property type="match status" value="1"/>
</dbReference>
<dbReference type="NCBIfam" id="TIGR00018">
    <property type="entry name" value="panC"/>
    <property type="match status" value="1"/>
</dbReference>
<dbReference type="PANTHER" id="PTHR21299">
    <property type="entry name" value="CYTIDYLATE KINASE/PANTOATE-BETA-ALANINE LIGASE"/>
    <property type="match status" value="1"/>
</dbReference>
<dbReference type="PANTHER" id="PTHR21299:SF1">
    <property type="entry name" value="PANTOATE--BETA-ALANINE LIGASE"/>
    <property type="match status" value="1"/>
</dbReference>
<dbReference type="Pfam" id="PF02569">
    <property type="entry name" value="Pantoate_ligase"/>
    <property type="match status" value="1"/>
</dbReference>
<dbReference type="SUPFAM" id="SSF52374">
    <property type="entry name" value="Nucleotidylyl transferase"/>
    <property type="match status" value="1"/>
</dbReference>
<evidence type="ECO:0000255" key="1">
    <source>
        <dbReference type="HAMAP-Rule" id="MF_00158"/>
    </source>
</evidence>
<feature type="chain" id="PRO_1000097111" description="Pantothenate synthetase">
    <location>
        <begin position="1"/>
        <end position="283"/>
    </location>
</feature>
<feature type="active site" description="Proton donor" evidence="1">
    <location>
        <position position="37"/>
    </location>
</feature>
<feature type="binding site" evidence="1">
    <location>
        <begin position="30"/>
        <end position="37"/>
    </location>
    <ligand>
        <name>ATP</name>
        <dbReference type="ChEBI" id="CHEBI:30616"/>
    </ligand>
</feature>
<feature type="binding site" evidence="1">
    <location>
        <position position="61"/>
    </location>
    <ligand>
        <name>(R)-pantoate</name>
        <dbReference type="ChEBI" id="CHEBI:15980"/>
    </ligand>
</feature>
<feature type="binding site" evidence="1">
    <location>
        <position position="61"/>
    </location>
    <ligand>
        <name>beta-alanine</name>
        <dbReference type="ChEBI" id="CHEBI:57966"/>
    </ligand>
</feature>
<feature type="binding site" evidence="1">
    <location>
        <begin position="149"/>
        <end position="152"/>
    </location>
    <ligand>
        <name>ATP</name>
        <dbReference type="ChEBI" id="CHEBI:30616"/>
    </ligand>
</feature>
<feature type="binding site" evidence="1">
    <location>
        <position position="155"/>
    </location>
    <ligand>
        <name>(R)-pantoate</name>
        <dbReference type="ChEBI" id="CHEBI:15980"/>
    </ligand>
</feature>
<feature type="binding site" evidence="1">
    <location>
        <position position="178"/>
    </location>
    <ligand>
        <name>ATP</name>
        <dbReference type="ChEBI" id="CHEBI:30616"/>
    </ligand>
</feature>
<feature type="binding site" evidence="1">
    <location>
        <begin position="186"/>
        <end position="189"/>
    </location>
    <ligand>
        <name>ATP</name>
        <dbReference type="ChEBI" id="CHEBI:30616"/>
    </ligand>
</feature>
<accession>B0TTI1</accession>
<gene>
    <name evidence="1" type="primary">panC</name>
    <name type="ordered locus">Shal_0749</name>
</gene>
<sequence length="283" mass="30831">MITTQSISDIRAQVKAWRQKGETVAFVPTMGNLHLGHITLVKEAKTRADHVVASIFVNPMQFGQNEDLDAYPRTLAEDQAALTAAGAELLFTPTPEIIYPKGMDAQTYVEVPSISDLLCGASRPGHFRGVATVVCKLFNIVQPDIAVFGQKDFQQLLVIRTMVDDLSMPIEIVGVDTIREASGLAMSSRNGYLSAEQKDQASQIKRSLDKMAESLKAGLAFKDIITQAQTELAEAGFRNDYLEIRNANNFAIADAGDVKLVILVAAYMGSTRLIDNQVVTLNA</sequence>
<reference key="1">
    <citation type="submission" date="2008-01" db="EMBL/GenBank/DDBJ databases">
        <title>Complete sequence of Shewanella halifaxensis HAW-EB4.</title>
        <authorList>
            <consortium name="US DOE Joint Genome Institute"/>
            <person name="Copeland A."/>
            <person name="Lucas S."/>
            <person name="Lapidus A."/>
            <person name="Glavina del Rio T."/>
            <person name="Dalin E."/>
            <person name="Tice H."/>
            <person name="Bruce D."/>
            <person name="Goodwin L."/>
            <person name="Pitluck S."/>
            <person name="Sims D."/>
            <person name="Brettin T."/>
            <person name="Detter J.C."/>
            <person name="Han C."/>
            <person name="Kuske C.R."/>
            <person name="Schmutz J."/>
            <person name="Larimer F."/>
            <person name="Land M."/>
            <person name="Hauser L."/>
            <person name="Kyrpides N."/>
            <person name="Kim E."/>
            <person name="Zhao J.-S."/>
            <person name="Richardson P."/>
        </authorList>
    </citation>
    <scope>NUCLEOTIDE SEQUENCE [LARGE SCALE GENOMIC DNA]</scope>
    <source>
        <strain>HAW-EB4</strain>
    </source>
</reference>
<name>PANC_SHEHH</name>
<protein>
    <recommendedName>
        <fullName evidence="1">Pantothenate synthetase</fullName>
        <shortName evidence="1">PS</shortName>
        <ecNumber evidence="1">6.3.2.1</ecNumber>
    </recommendedName>
    <alternativeName>
        <fullName evidence="1">Pantoate--beta-alanine ligase</fullName>
    </alternativeName>
    <alternativeName>
        <fullName evidence="1">Pantoate-activating enzyme</fullName>
    </alternativeName>
</protein>